<accession>Q06235</accession>
<accession>D6VYG7</accession>
<gene>
    <name type="ordered locus">YLR162W</name>
</gene>
<organism>
    <name type="scientific">Saccharomyces cerevisiae (strain ATCC 204508 / S288c)</name>
    <name type="common">Baker's yeast</name>
    <dbReference type="NCBI Taxonomy" id="559292"/>
    <lineage>
        <taxon>Eukaryota</taxon>
        <taxon>Fungi</taxon>
        <taxon>Dikarya</taxon>
        <taxon>Ascomycota</taxon>
        <taxon>Saccharomycotina</taxon>
        <taxon>Saccharomycetes</taxon>
        <taxon>Saccharomycetales</taxon>
        <taxon>Saccharomycetaceae</taxon>
        <taxon>Saccharomyces</taxon>
    </lineage>
</organism>
<comment type="function">
    <text evidence="3">Overexpression confers resistance to the antimicrobial peptide MiAMP1.</text>
</comment>
<comment type="subcellular location">
    <subcellularLocation>
        <location evidence="4">Membrane</location>
        <topology evidence="4">Single-pass membrane protein</topology>
    </subcellularLocation>
</comment>
<name>YL162_YEAST</name>
<sequence length="118" mass="13055">MQHTLTRTASLPERSSSAHSAATALPALRRPPDSCETLVPLLCIFWFVFVSMSPLPPARANKSDNKGLISADRNNKATLLLTIPRCTSKSYTNDLSPLKMTLLSAGKHPRPFRQEHRC</sequence>
<keyword id="KW-0472">Membrane</keyword>
<keyword id="KW-1185">Reference proteome</keyword>
<keyword id="KW-0812">Transmembrane</keyword>
<keyword id="KW-1133">Transmembrane helix</keyword>
<evidence type="ECO:0000255" key="1"/>
<evidence type="ECO:0000256" key="2">
    <source>
        <dbReference type="SAM" id="MobiDB-lite"/>
    </source>
</evidence>
<evidence type="ECO:0000269" key="3">
    <source>
    </source>
</evidence>
<evidence type="ECO:0000305" key="4"/>
<dbReference type="EMBL" id="U51921">
    <property type="protein sequence ID" value="AAB67486.1"/>
    <property type="molecule type" value="Genomic_DNA"/>
</dbReference>
<dbReference type="EMBL" id="BK006945">
    <property type="protein sequence ID" value="DAA09483.1"/>
    <property type="molecule type" value="Genomic_DNA"/>
</dbReference>
<dbReference type="PIR" id="S68478">
    <property type="entry name" value="S68478"/>
</dbReference>
<dbReference type="RefSeq" id="NP_013263.1">
    <property type="nucleotide sequence ID" value="NM_001182049.1"/>
</dbReference>
<dbReference type="BioGRID" id="31435">
    <property type="interactions" value="39"/>
</dbReference>
<dbReference type="FunCoup" id="Q06235">
    <property type="interactions" value="45"/>
</dbReference>
<dbReference type="STRING" id="4932.YLR162W"/>
<dbReference type="PaxDb" id="4932-YLR162W"/>
<dbReference type="EnsemblFungi" id="YLR162W_mRNA">
    <property type="protein sequence ID" value="YLR162W"/>
    <property type="gene ID" value="YLR162W"/>
</dbReference>
<dbReference type="GeneID" id="850859"/>
<dbReference type="KEGG" id="sce:YLR162W"/>
<dbReference type="AGR" id="SGD:S000004152"/>
<dbReference type="SGD" id="S000004152">
    <property type="gene designation" value="YLR162W"/>
</dbReference>
<dbReference type="VEuPathDB" id="FungiDB:YLR162W"/>
<dbReference type="eggNOG" id="ENOG502T08F">
    <property type="taxonomic scope" value="Eukaryota"/>
</dbReference>
<dbReference type="HOGENOM" id="CLU_2075002_0_0_1"/>
<dbReference type="InParanoid" id="Q06235"/>
<dbReference type="OrthoDB" id="5152103at2759"/>
<dbReference type="BioCyc" id="YEAST:G3O-32292-MONOMER"/>
<dbReference type="BioGRID-ORCS" id="850859">
    <property type="hits" value="7 hits in 10 CRISPR screens"/>
</dbReference>
<dbReference type="PRO" id="PR:Q06235"/>
<dbReference type="Proteomes" id="UP000002311">
    <property type="component" value="Chromosome XII"/>
</dbReference>
<dbReference type="RNAct" id="Q06235">
    <property type="molecule type" value="protein"/>
</dbReference>
<dbReference type="GO" id="GO:0016020">
    <property type="term" value="C:membrane"/>
    <property type="evidence" value="ECO:0007669"/>
    <property type="project" value="UniProtKB-SubCell"/>
</dbReference>
<proteinExistence type="predicted"/>
<reference key="1">
    <citation type="journal article" date="1997" name="Nature">
        <title>The nucleotide sequence of Saccharomyces cerevisiae chromosome XII.</title>
        <authorList>
            <person name="Johnston M."/>
            <person name="Hillier L.W."/>
            <person name="Riles L."/>
            <person name="Albermann K."/>
            <person name="Andre B."/>
            <person name="Ansorge W."/>
            <person name="Benes V."/>
            <person name="Brueckner M."/>
            <person name="Delius H."/>
            <person name="Dubois E."/>
            <person name="Duesterhoeft A."/>
            <person name="Entian K.-D."/>
            <person name="Floeth M."/>
            <person name="Goffeau A."/>
            <person name="Hebling U."/>
            <person name="Heumann K."/>
            <person name="Heuss-Neitzel D."/>
            <person name="Hilbert H."/>
            <person name="Hilger F."/>
            <person name="Kleine K."/>
            <person name="Koetter P."/>
            <person name="Louis E.J."/>
            <person name="Messenguy F."/>
            <person name="Mewes H.-W."/>
            <person name="Miosga T."/>
            <person name="Moestl D."/>
            <person name="Mueller-Auer S."/>
            <person name="Nentwich U."/>
            <person name="Obermaier B."/>
            <person name="Piravandi E."/>
            <person name="Pohl T.M."/>
            <person name="Portetelle D."/>
            <person name="Purnelle B."/>
            <person name="Rechmann S."/>
            <person name="Rieger M."/>
            <person name="Rinke M."/>
            <person name="Rose M."/>
            <person name="Scharfe M."/>
            <person name="Scherens B."/>
            <person name="Scholler P."/>
            <person name="Schwager C."/>
            <person name="Schwarz S."/>
            <person name="Underwood A.P."/>
            <person name="Urrestarazu L.A."/>
            <person name="Vandenbol M."/>
            <person name="Verhasselt P."/>
            <person name="Vierendeels F."/>
            <person name="Voet M."/>
            <person name="Volckaert G."/>
            <person name="Voss H."/>
            <person name="Wambutt R."/>
            <person name="Wedler E."/>
            <person name="Wedler H."/>
            <person name="Zimmermann F.K."/>
            <person name="Zollner A."/>
            <person name="Hani J."/>
            <person name="Hoheisel J.D."/>
        </authorList>
    </citation>
    <scope>NUCLEOTIDE SEQUENCE [LARGE SCALE GENOMIC DNA]</scope>
    <source>
        <strain>ATCC 204508 / S288c</strain>
    </source>
</reference>
<reference key="2">
    <citation type="journal article" date="2014" name="G3 (Bethesda)">
        <title>The reference genome sequence of Saccharomyces cerevisiae: Then and now.</title>
        <authorList>
            <person name="Engel S.R."/>
            <person name="Dietrich F.S."/>
            <person name="Fisk D.G."/>
            <person name="Binkley G."/>
            <person name="Balakrishnan R."/>
            <person name="Costanzo M.C."/>
            <person name="Dwight S.S."/>
            <person name="Hitz B.C."/>
            <person name="Karra K."/>
            <person name="Nash R.S."/>
            <person name="Weng S."/>
            <person name="Wong E.D."/>
            <person name="Lloyd P."/>
            <person name="Skrzypek M.S."/>
            <person name="Miyasato S.R."/>
            <person name="Simison M."/>
            <person name="Cherry J.M."/>
        </authorList>
    </citation>
    <scope>GENOME REANNOTATION</scope>
    <source>
        <strain>ATCC 204508 / S288c</strain>
    </source>
</reference>
<reference key="3">
    <citation type="journal article" date="2005" name="Curr. Genet.">
        <title>Altered fungal sensitivity to a plant antimicrobial peptide through over-expression of yeast cDNAs.</title>
        <authorList>
            <person name="Stephens C."/>
            <person name="Harrison S.J."/>
            <person name="Kazan K."/>
            <person name="Smith F.W.N."/>
            <person name="Goulter K.C."/>
            <person name="Maclean D.J."/>
            <person name="Manners J.M."/>
        </authorList>
    </citation>
    <scope>FUNCTION</scope>
</reference>
<feature type="chain" id="PRO_0000262878" description="Protein YLR162W">
    <location>
        <begin position="1"/>
        <end position="118"/>
    </location>
</feature>
<feature type="transmembrane region" description="Helical" evidence="1">
    <location>
        <begin position="38"/>
        <end position="58"/>
    </location>
</feature>
<feature type="region of interest" description="Disordered" evidence="2">
    <location>
        <begin position="1"/>
        <end position="26"/>
    </location>
</feature>
<feature type="compositionally biased region" description="Polar residues" evidence="2">
    <location>
        <begin position="1"/>
        <end position="20"/>
    </location>
</feature>
<protein>
    <recommendedName>
        <fullName>Protein YLR162W</fullName>
    </recommendedName>
</protein>